<feature type="chain" id="PRO_1000026394" description="Fluoride-specific ion channel FluC">
    <location>
        <begin position="1"/>
        <end position="127"/>
    </location>
</feature>
<feature type="transmembrane region" description="Helical" evidence="1">
    <location>
        <begin position="3"/>
        <end position="23"/>
    </location>
</feature>
<feature type="transmembrane region" description="Helical" evidence="1">
    <location>
        <begin position="38"/>
        <end position="58"/>
    </location>
</feature>
<feature type="transmembrane region" description="Helical" evidence="1">
    <location>
        <begin position="67"/>
        <end position="87"/>
    </location>
</feature>
<feature type="transmembrane region" description="Helical" evidence="1">
    <location>
        <begin position="102"/>
        <end position="122"/>
    </location>
</feature>
<feature type="binding site" evidence="1">
    <location>
        <position position="77"/>
    </location>
    <ligand>
        <name>Na(+)</name>
        <dbReference type="ChEBI" id="CHEBI:29101"/>
        <note>structural</note>
    </ligand>
</feature>
<feature type="binding site" evidence="1">
    <location>
        <position position="80"/>
    </location>
    <ligand>
        <name>Na(+)</name>
        <dbReference type="ChEBI" id="CHEBI:29101"/>
        <note>structural</note>
    </ligand>
</feature>
<dbReference type="EMBL" id="AM260522">
    <property type="protein sequence ID" value="CAK00312.1"/>
    <property type="molecule type" value="Genomic_DNA"/>
</dbReference>
<dbReference type="RefSeq" id="WP_011578395.1">
    <property type="nucleotide sequence ID" value="NC_008229.1"/>
</dbReference>
<dbReference type="SMR" id="Q17VL4"/>
<dbReference type="STRING" id="382638.Hac_1601"/>
<dbReference type="GeneID" id="31758859"/>
<dbReference type="KEGG" id="hac:Hac_1601"/>
<dbReference type="eggNOG" id="COG0239">
    <property type="taxonomic scope" value="Bacteria"/>
</dbReference>
<dbReference type="HOGENOM" id="CLU_114342_2_3_7"/>
<dbReference type="OrthoDB" id="9806299at2"/>
<dbReference type="BioCyc" id="HACI382638:HAC_RS06790-MONOMER"/>
<dbReference type="Proteomes" id="UP000000775">
    <property type="component" value="Chromosome"/>
</dbReference>
<dbReference type="GO" id="GO:0005886">
    <property type="term" value="C:plasma membrane"/>
    <property type="evidence" value="ECO:0007669"/>
    <property type="project" value="UniProtKB-SubCell"/>
</dbReference>
<dbReference type="GO" id="GO:0062054">
    <property type="term" value="F:fluoride channel activity"/>
    <property type="evidence" value="ECO:0007669"/>
    <property type="project" value="UniProtKB-UniRule"/>
</dbReference>
<dbReference type="GO" id="GO:0046872">
    <property type="term" value="F:metal ion binding"/>
    <property type="evidence" value="ECO:0007669"/>
    <property type="project" value="UniProtKB-KW"/>
</dbReference>
<dbReference type="GO" id="GO:0140114">
    <property type="term" value="P:cellular detoxification of fluoride"/>
    <property type="evidence" value="ECO:0007669"/>
    <property type="project" value="UniProtKB-UniRule"/>
</dbReference>
<dbReference type="HAMAP" id="MF_00454">
    <property type="entry name" value="FluC"/>
    <property type="match status" value="1"/>
</dbReference>
<dbReference type="InterPro" id="IPR003691">
    <property type="entry name" value="FluC"/>
</dbReference>
<dbReference type="NCBIfam" id="TIGR00494">
    <property type="entry name" value="crcB"/>
    <property type="match status" value="1"/>
</dbReference>
<dbReference type="PANTHER" id="PTHR28259">
    <property type="entry name" value="FLUORIDE EXPORT PROTEIN 1-RELATED"/>
    <property type="match status" value="1"/>
</dbReference>
<dbReference type="PANTHER" id="PTHR28259:SF18">
    <property type="entry name" value="FLUORIDE-SPECIFIC ION CHANNEL FLUC"/>
    <property type="match status" value="1"/>
</dbReference>
<dbReference type="Pfam" id="PF02537">
    <property type="entry name" value="CRCB"/>
    <property type="match status" value="1"/>
</dbReference>
<organism>
    <name type="scientific">Helicobacter acinonychis (strain Sheeba)</name>
    <dbReference type="NCBI Taxonomy" id="382638"/>
    <lineage>
        <taxon>Bacteria</taxon>
        <taxon>Pseudomonadati</taxon>
        <taxon>Campylobacterota</taxon>
        <taxon>Epsilonproteobacteria</taxon>
        <taxon>Campylobacterales</taxon>
        <taxon>Helicobacteraceae</taxon>
        <taxon>Helicobacter</taxon>
    </lineage>
</organism>
<evidence type="ECO:0000255" key="1">
    <source>
        <dbReference type="HAMAP-Rule" id="MF_00454"/>
    </source>
</evidence>
<protein>
    <recommendedName>
        <fullName evidence="1">Fluoride-specific ion channel FluC</fullName>
    </recommendedName>
</protein>
<sequence>MNLVFLWAALGGALGSSLRYFVGKMMPSKFLMFESFPLGTFSVNLIGCFVIGLMGHLAAKKVFGDDFGIFFVTGVLGGFTTFSSYGLDTLKLLQKSQYIEAISYVLGTNILGLIGVAIGWFLAKNFV</sequence>
<comment type="function">
    <text evidence="1">Fluoride-specific ion channel. Important for reducing fluoride concentration in the cell, thus reducing its toxicity.</text>
</comment>
<comment type="catalytic activity">
    <reaction evidence="1">
        <text>fluoride(in) = fluoride(out)</text>
        <dbReference type="Rhea" id="RHEA:76159"/>
        <dbReference type="ChEBI" id="CHEBI:17051"/>
    </reaction>
    <physiologicalReaction direction="left-to-right" evidence="1">
        <dbReference type="Rhea" id="RHEA:76160"/>
    </physiologicalReaction>
</comment>
<comment type="activity regulation">
    <text evidence="1">Na(+) is not transported, but it plays an essential structural role and its presence is essential for fluoride channel function.</text>
</comment>
<comment type="subcellular location">
    <subcellularLocation>
        <location evidence="1">Cell inner membrane</location>
        <topology evidence="1">Multi-pass membrane protein</topology>
    </subcellularLocation>
</comment>
<comment type="similarity">
    <text evidence="1">Belongs to the fluoride channel Fluc/FEX (TC 1.A.43) family.</text>
</comment>
<proteinExistence type="inferred from homology"/>
<keyword id="KW-0997">Cell inner membrane</keyword>
<keyword id="KW-1003">Cell membrane</keyword>
<keyword id="KW-0407">Ion channel</keyword>
<keyword id="KW-0406">Ion transport</keyword>
<keyword id="KW-0472">Membrane</keyword>
<keyword id="KW-0479">Metal-binding</keyword>
<keyword id="KW-0915">Sodium</keyword>
<keyword id="KW-0812">Transmembrane</keyword>
<keyword id="KW-1133">Transmembrane helix</keyword>
<keyword id="KW-0813">Transport</keyword>
<reference key="1">
    <citation type="journal article" date="2006" name="PLoS Genet.">
        <title>Who ate whom? Adaptive Helicobacter genomic changes that accompanied a host jump from early humans to large felines.</title>
        <authorList>
            <person name="Eppinger M."/>
            <person name="Baar C."/>
            <person name="Linz B."/>
            <person name="Raddatz G."/>
            <person name="Lanz C."/>
            <person name="Keller H."/>
            <person name="Morelli G."/>
            <person name="Gressmann H."/>
            <person name="Achtman M."/>
            <person name="Schuster S.C."/>
        </authorList>
    </citation>
    <scope>NUCLEOTIDE SEQUENCE [LARGE SCALE GENOMIC DNA]</scope>
    <source>
        <strain>Sheeba</strain>
    </source>
</reference>
<name>FLUC_HELAH</name>
<gene>
    <name evidence="1" type="primary">fluC</name>
    <name evidence="1" type="synonym">crcB</name>
    <name type="ordered locus">Hac_1601</name>
</gene>
<accession>Q17VL4</accession>